<reference key="1">
    <citation type="journal article" date="1999" name="Nature">
        <title>Genomic sequence comparison of two unrelated isolates of the human gastric pathogen Helicobacter pylori.</title>
        <authorList>
            <person name="Alm R.A."/>
            <person name="Ling L.-S.L."/>
            <person name="Moir D.T."/>
            <person name="King B.L."/>
            <person name="Brown E.D."/>
            <person name="Doig P.C."/>
            <person name="Smith D.R."/>
            <person name="Noonan B."/>
            <person name="Guild B.C."/>
            <person name="deJonge B.L."/>
            <person name="Carmel G."/>
            <person name="Tummino P.J."/>
            <person name="Caruso A."/>
            <person name="Uria-Nickelsen M."/>
            <person name="Mills D.M."/>
            <person name="Ives C."/>
            <person name="Gibson R."/>
            <person name="Merberg D."/>
            <person name="Mills S.D."/>
            <person name="Jiang Q."/>
            <person name="Taylor D.E."/>
            <person name="Vovis G.F."/>
            <person name="Trust T.J."/>
        </authorList>
    </citation>
    <scope>NUCLEOTIDE SEQUENCE [LARGE SCALE GENOMIC DNA]</scope>
    <source>
        <strain>J99 / ATCC 700824</strain>
    </source>
</reference>
<organism>
    <name type="scientific">Helicobacter pylori (strain J99 / ATCC 700824)</name>
    <name type="common">Campylobacter pylori J99</name>
    <dbReference type="NCBI Taxonomy" id="85963"/>
    <lineage>
        <taxon>Bacteria</taxon>
        <taxon>Pseudomonadati</taxon>
        <taxon>Campylobacterota</taxon>
        <taxon>Epsilonproteobacteria</taxon>
        <taxon>Campylobacterales</taxon>
        <taxon>Helicobacteraceae</taxon>
        <taxon>Helicobacter</taxon>
    </lineage>
</organism>
<keyword id="KW-0067">ATP-binding</keyword>
<keyword id="KW-0963">Cytoplasm</keyword>
<keyword id="KW-0324">Glycolysis</keyword>
<keyword id="KW-0418">Kinase</keyword>
<keyword id="KW-0547">Nucleotide-binding</keyword>
<keyword id="KW-0808">Transferase</keyword>
<protein>
    <recommendedName>
        <fullName evidence="1">Glucokinase</fullName>
        <ecNumber evidence="1">2.7.1.2</ecNumber>
    </recommendedName>
    <alternativeName>
        <fullName evidence="1">Glucose kinase</fullName>
    </alternativeName>
</protein>
<gene>
    <name evidence="1" type="primary">glk</name>
    <name type="ordered locus">jhp_1029</name>
</gene>
<proteinExistence type="inferred from homology"/>
<feature type="chain" id="PRO_0000215129" description="Glucokinase">
    <location>
        <begin position="1"/>
        <end position="336"/>
    </location>
</feature>
<feature type="binding site" evidence="1">
    <location>
        <begin position="12"/>
        <end position="17"/>
    </location>
    <ligand>
        <name>ATP</name>
        <dbReference type="ChEBI" id="CHEBI:30616"/>
    </ligand>
</feature>
<sequence length="336" mass="36759">MPKTETYPRLLADIGGTNARFGLEVAPRQIECVEVLRCEDFESLSDAVRFYLSKCKESLKLHPIYGSFAVATPIMGDFVQMTNNHWTFSIETTRQCLNLKKLLVINDFVAQAYAISAMQENDLAQIGGIKCEINAPKAILGPGTGLGVSTLIQNSDGSLKVLPGEGGHVSFAPFDDLEILVWQYARSKFNHVSAERFLSGSGLVLIYEALSKRKGLEKVAKLSKAELTPQIISERALNGDYPICRLTLDTFCSMLGTLAADVALTLGARGGVYLCGGIIPRFIDYFKTSPFRARFETKGRMGAFLASIPVHVVMKKTPGLDGAGIALENYLLHDRI</sequence>
<evidence type="ECO:0000255" key="1">
    <source>
        <dbReference type="HAMAP-Rule" id="MF_00524"/>
    </source>
</evidence>
<accession>Q9ZKB0</accession>
<comment type="catalytic activity">
    <reaction evidence="1">
        <text>D-glucose + ATP = D-glucose 6-phosphate + ADP + H(+)</text>
        <dbReference type="Rhea" id="RHEA:17825"/>
        <dbReference type="ChEBI" id="CHEBI:4167"/>
        <dbReference type="ChEBI" id="CHEBI:15378"/>
        <dbReference type="ChEBI" id="CHEBI:30616"/>
        <dbReference type="ChEBI" id="CHEBI:61548"/>
        <dbReference type="ChEBI" id="CHEBI:456216"/>
        <dbReference type="EC" id="2.7.1.2"/>
    </reaction>
</comment>
<comment type="subcellular location">
    <subcellularLocation>
        <location evidence="1">Cytoplasm</location>
    </subcellularLocation>
</comment>
<comment type="similarity">
    <text evidence="1">Belongs to the bacterial glucokinase family.</text>
</comment>
<name>GLK_HELPJ</name>
<dbReference type="EC" id="2.7.1.2" evidence="1"/>
<dbReference type="EMBL" id="AE001439">
    <property type="protein sequence ID" value="AAD06594.1"/>
    <property type="molecule type" value="Genomic_DNA"/>
</dbReference>
<dbReference type="PIR" id="H71859">
    <property type="entry name" value="H71859"/>
</dbReference>
<dbReference type="RefSeq" id="WP_001126913.1">
    <property type="nucleotide sequence ID" value="NZ_CP011330.1"/>
</dbReference>
<dbReference type="SMR" id="Q9ZKB0"/>
<dbReference type="KEGG" id="hpj:jhp_1029"/>
<dbReference type="PATRIC" id="fig|85963.30.peg.1562"/>
<dbReference type="eggNOG" id="COG0837">
    <property type="taxonomic scope" value="Bacteria"/>
</dbReference>
<dbReference type="Proteomes" id="UP000000804">
    <property type="component" value="Chromosome"/>
</dbReference>
<dbReference type="GO" id="GO:0005829">
    <property type="term" value="C:cytosol"/>
    <property type="evidence" value="ECO:0007669"/>
    <property type="project" value="TreeGrafter"/>
</dbReference>
<dbReference type="GO" id="GO:0005524">
    <property type="term" value="F:ATP binding"/>
    <property type="evidence" value="ECO:0007669"/>
    <property type="project" value="UniProtKB-UniRule"/>
</dbReference>
<dbReference type="GO" id="GO:0005536">
    <property type="term" value="F:D-glucose binding"/>
    <property type="evidence" value="ECO:0007669"/>
    <property type="project" value="InterPro"/>
</dbReference>
<dbReference type="GO" id="GO:0004340">
    <property type="term" value="F:glucokinase activity"/>
    <property type="evidence" value="ECO:0007669"/>
    <property type="project" value="UniProtKB-UniRule"/>
</dbReference>
<dbReference type="GO" id="GO:0006096">
    <property type="term" value="P:glycolytic process"/>
    <property type="evidence" value="ECO:0007669"/>
    <property type="project" value="UniProtKB-UniRule"/>
</dbReference>
<dbReference type="CDD" id="cd24008">
    <property type="entry name" value="ASKHA_NBD_GLK"/>
    <property type="match status" value="1"/>
</dbReference>
<dbReference type="FunFam" id="3.40.367.20:FF:000002">
    <property type="entry name" value="Glucokinase"/>
    <property type="match status" value="1"/>
</dbReference>
<dbReference type="Gene3D" id="3.30.420.40">
    <property type="match status" value="1"/>
</dbReference>
<dbReference type="Gene3D" id="3.40.367.20">
    <property type="match status" value="1"/>
</dbReference>
<dbReference type="HAMAP" id="MF_00524">
    <property type="entry name" value="Glucokinase"/>
    <property type="match status" value="1"/>
</dbReference>
<dbReference type="InterPro" id="IPR043129">
    <property type="entry name" value="ATPase_NBD"/>
</dbReference>
<dbReference type="InterPro" id="IPR050201">
    <property type="entry name" value="Bacterial_glucokinase"/>
</dbReference>
<dbReference type="InterPro" id="IPR003836">
    <property type="entry name" value="Glucokinase"/>
</dbReference>
<dbReference type="NCBIfam" id="TIGR00749">
    <property type="entry name" value="glk"/>
    <property type="match status" value="1"/>
</dbReference>
<dbReference type="NCBIfam" id="NF001416">
    <property type="entry name" value="PRK00292.1-3"/>
    <property type="match status" value="1"/>
</dbReference>
<dbReference type="PANTHER" id="PTHR47690">
    <property type="entry name" value="GLUCOKINASE"/>
    <property type="match status" value="1"/>
</dbReference>
<dbReference type="PANTHER" id="PTHR47690:SF1">
    <property type="entry name" value="GLUCOKINASE"/>
    <property type="match status" value="1"/>
</dbReference>
<dbReference type="Pfam" id="PF02685">
    <property type="entry name" value="Glucokinase"/>
    <property type="match status" value="1"/>
</dbReference>
<dbReference type="SUPFAM" id="SSF53067">
    <property type="entry name" value="Actin-like ATPase domain"/>
    <property type="match status" value="1"/>
</dbReference>